<reference key="1">
    <citation type="journal article" date="2008" name="J. Bacteriol.">
        <title>The genome of Heliobacterium modesticaldum, a phototrophic representative of the Firmicutes containing the simplest photosynthetic apparatus.</title>
        <authorList>
            <person name="Sattley W.M."/>
            <person name="Madigan M.T."/>
            <person name="Swingley W.D."/>
            <person name="Cheung P.C."/>
            <person name="Clocksin K.M."/>
            <person name="Conrad A.L."/>
            <person name="Dejesa L.C."/>
            <person name="Honchak B.M."/>
            <person name="Jung D.O."/>
            <person name="Karbach L.E."/>
            <person name="Kurdoglu A."/>
            <person name="Lahiri S."/>
            <person name="Mastrian S.D."/>
            <person name="Page L.E."/>
            <person name="Taylor H.L."/>
            <person name="Wang Z.T."/>
            <person name="Raymond J."/>
            <person name="Chen M."/>
            <person name="Blankenship R.E."/>
            <person name="Touchman J.W."/>
        </authorList>
    </citation>
    <scope>NUCLEOTIDE SEQUENCE [LARGE SCALE GENOMIC DNA]</scope>
    <source>
        <strain>ATCC 51547 / Ice1</strain>
    </source>
</reference>
<dbReference type="EC" id="3.1.26.3" evidence="1"/>
<dbReference type="EMBL" id="CP000930">
    <property type="protein sequence ID" value="ABZ84725.1"/>
    <property type="molecule type" value="Genomic_DNA"/>
</dbReference>
<dbReference type="RefSeq" id="WP_012283225.1">
    <property type="nucleotide sequence ID" value="NC_010337.2"/>
</dbReference>
<dbReference type="SMR" id="B0TGW4"/>
<dbReference type="STRING" id="498761.HM1_2169"/>
<dbReference type="KEGG" id="hmo:HM1_2169"/>
<dbReference type="eggNOG" id="COG0571">
    <property type="taxonomic scope" value="Bacteria"/>
</dbReference>
<dbReference type="HOGENOM" id="CLU_000907_1_3_9"/>
<dbReference type="OrthoDB" id="9805026at2"/>
<dbReference type="Proteomes" id="UP000008550">
    <property type="component" value="Chromosome"/>
</dbReference>
<dbReference type="GO" id="GO:0005737">
    <property type="term" value="C:cytoplasm"/>
    <property type="evidence" value="ECO:0007669"/>
    <property type="project" value="UniProtKB-SubCell"/>
</dbReference>
<dbReference type="GO" id="GO:0003725">
    <property type="term" value="F:double-stranded RNA binding"/>
    <property type="evidence" value="ECO:0007669"/>
    <property type="project" value="TreeGrafter"/>
</dbReference>
<dbReference type="GO" id="GO:0046872">
    <property type="term" value="F:metal ion binding"/>
    <property type="evidence" value="ECO:0007669"/>
    <property type="project" value="UniProtKB-KW"/>
</dbReference>
<dbReference type="GO" id="GO:0004525">
    <property type="term" value="F:ribonuclease III activity"/>
    <property type="evidence" value="ECO:0007669"/>
    <property type="project" value="UniProtKB-UniRule"/>
</dbReference>
<dbReference type="GO" id="GO:0019843">
    <property type="term" value="F:rRNA binding"/>
    <property type="evidence" value="ECO:0007669"/>
    <property type="project" value="UniProtKB-KW"/>
</dbReference>
<dbReference type="GO" id="GO:0006397">
    <property type="term" value="P:mRNA processing"/>
    <property type="evidence" value="ECO:0007669"/>
    <property type="project" value="UniProtKB-UniRule"/>
</dbReference>
<dbReference type="GO" id="GO:0010468">
    <property type="term" value="P:regulation of gene expression"/>
    <property type="evidence" value="ECO:0007669"/>
    <property type="project" value="TreeGrafter"/>
</dbReference>
<dbReference type="GO" id="GO:0006364">
    <property type="term" value="P:rRNA processing"/>
    <property type="evidence" value="ECO:0007669"/>
    <property type="project" value="UniProtKB-UniRule"/>
</dbReference>
<dbReference type="GO" id="GO:0008033">
    <property type="term" value="P:tRNA processing"/>
    <property type="evidence" value="ECO:0007669"/>
    <property type="project" value="UniProtKB-KW"/>
</dbReference>
<dbReference type="CDD" id="cd10845">
    <property type="entry name" value="DSRM_RNAse_III_family"/>
    <property type="match status" value="1"/>
</dbReference>
<dbReference type="CDD" id="cd00593">
    <property type="entry name" value="RIBOc"/>
    <property type="match status" value="1"/>
</dbReference>
<dbReference type="FunFam" id="1.10.1520.10:FF:000001">
    <property type="entry name" value="Ribonuclease 3"/>
    <property type="match status" value="1"/>
</dbReference>
<dbReference type="FunFam" id="3.30.160.20:FF:000003">
    <property type="entry name" value="Ribonuclease 3"/>
    <property type="match status" value="1"/>
</dbReference>
<dbReference type="Gene3D" id="3.30.160.20">
    <property type="match status" value="1"/>
</dbReference>
<dbReference type="Gene3D" id="1.10.1520.10">
    <property type="entry name" value="Ribonuclease III domain"/>
    <property type="match status" value="1"/>
</dbReference>
<dbReference type="HAMAP" id="MF_00104">
    <property type="entry name" value="RNase_III"/>
    <property type="match status" value="1"/>
</dbReference>
<dbReference type="InterPro" id="IPR014720">
    <property type="entry name" value="dsRBD_dom"/>
</dbReference>
<dbReference type="InterPro" id="IPR011907">
    <property type="entry name" value="RNase_III"/>
</dbReference>
<dbReference type="InterPro" id="IPR000999">
    <property type="entry name" value="RNase_III_dom"/>
</dbReference>
<dbReference type="InterPro" id="IPR036389">
    <property type="entry name" value="RNase_III_sf"/>
</dbReference>
<dbReference type="NCBIfam" id="TIGR02191">
    <property type="entry name" value="RNaseIII"/>
    <property type="match status" value="1"/>
</dbReference>
<dbReference type="PANTHER" id="PTHR11207:SF0">
    <property type="entry name" value="RIBONUCLEASE 3"/>
    <property type="match status" value="1"/>
</dbReference>
<dbReference type="PANTHER" id="PTHR11207">
    <property type="entry name" value="RIBONUCLEASE III"/>
    <property type="match status" value="1"/>
</dbReference>
<dbReference type="Pfam" id="PF00035">
    <property type="entry name" value="dsrm"/>
    <property type="match status" value="1"/>
</dbReference>
<dbReference type="Pfam" id="PF14622">
    <property type="entry name" value="Ribonucleas_3_3"/>
    <property type="match status" value="1"/>
</dbReference>
<dbReference type="SMART" id="SM00358">
    <property type="entry name" value="DSRM"/>
    <property type="match status" value="1"/>
</dbReference>
<dbReference type="SMART" id="SM00535">
    <property type="entry name" value="RIBOc"/>
    <property type="match status" value="1"/>
</dbReference>
<dbReference type="SUPFAM" id="SSF54768">
    <property type="entry name" value="dsRNA-binding domain-like"/>
    <property type="match status" value="1"/>
</dbReference>
<dbReference type="SUPFAM" id="SSF69065">
    <property type="entry name" value="RNase III domain-like"/>
    <property type="match status" value="1"/>
</dbReference>
<dbReference type="PROSITE" id="PS50137">
    <property type="entry name" value="DS_RBD"/>
    <property type="match status" value="1"/>
</dbReference>
<dbReference type="PROSITE" id="PS00517">
    <property type="entry name" value="RNASE_3_1"/>
    <property type="match status" value="1"/>
</dbReference>
<dbReference type="PROSITE" id="PS50142">
    <property type="entry name" value="RNASE_3_2"/>
    <property type="match status" value="1"/>
</dbReference>
<comment type="function">
    <text evidence="1">Digests double-stranded RNA. Involved in the processing of primary rRNA transcript to yield the immediate precursors to the large and small rRNAs (23S and 16S). Processes some mRNAs, and tRNAs when they are encoded in the rRNA operon. Processes pre-crRNA and tracrRNA of type II CRISPR loci if present in the organism.</text>
</comment>
<comment type="catalytic activity">
    <reaction evidence="1">
        <text>Endonucleolytic cleavage to 5'-phosphomonoester.</text>
        <dbReference type="EC" id="3.1.26.3"/>
    </reaction>
</comment>
<comment type="cofactor">
    <cofactor evidence="1">
        <name>Mg(2+)</name>
        <dbReference type="ChEBI" id="CHEBI:18420"/>
    </cofactor>
</comment>
<comment type="subunit">
    <text evidence="1">Homodimer.</text>
</comment>
<comment type="subcellular location">
    <subcellularLocation>
        <location evidence="1">Cytoplasm</location>
    </subcellularLocation>
</comment>
<comment type="similarity">
    <text evidence="1">Belongs to the ribonuclease III family.</text>
</comment>
<evidence type="ECO:0000255" key="1">
    <source>
        <dbReference type="HAMAP-Rule" id="MF_00104"/>
    </source>
</evidence>
<evidence type="ECO:0000256" key="2">
    <source>
        <dbReference type="SAM" id="MobiDB-lite"/>
    </source>
</evidence>
<gene>
    <name evidence="1" type="primary">rnc</name>
    <name type="ordered locus">Helmi_21000</name>
    <name type="ORF">HM1_2169</name>
</gene>
<keyword id="KW-0963">Cytoplasm</keyword>
<keyword id="KW-0255">Endonuclease</keyword>
<keyword id="KW-0378">Hydrolase</keyword>
<keyword id="KW-0460">Magnesium</keyword>
<keyword id="KW-0479">Metal-binding</keyword>
<keyword id="KW-0507">mRNA processing</keyword>
<keyword id="KW-0540">Nuclease</keyword>
<keyword id="KW-1185">Reference proteome</keyword>
<keyword id="KW-0694">RNA-binding</keyword>
<keyword id="KW-0698">rRNA processing</keyword>
<keyword id="KW-0699">rRNA-binding</keyword>
<keyword id="KW-0819">tRNA processing</keyword>
<feature type="chain" id="PRO_1000194429" description="Ribonuclease 3">
    <location>
        <begin position="1"/>
        <end position="235"/>
    </location>
</feature>
<feature type="domain" description="RNase III" evidence="1">
    <location>
        <begin position="8"/>
        <end position="137"/>
    </location>
</feature>
<feature type="domain" description="DRBM" evidence="1">
    <location>
        <begin position="163"/>
        <end position="232"/>
    </location>
</feature>
<feature type="region of interest" description="Disordered" evidence="2">
    <location>
        <begin position="211"/>
        <end position="235"/>
    </location>
</feature>
<feature type="compositionally biased region" description="Basic and acidic residues" evidence="2">
    <location>
        <begin position="226"/>
        <end position="235"/>
    </location>
</feature>
<feature type="active site" evidence="1">
    <location>
        <position position="54"/>
    </location>
</feature>
<feature type="active site" evidence="1">
    <location>
        <position position="126"/>
    </location>
</feature>
<feature type="binding site" evidence="1">
    <location>
        <position position="50"/>
    </location>
    <ligand>
        <name>Mg(2+)</name>
        <dbReference type="ChEBI" id="CHEBI:18420"/>
    </ligand>
</feature>
<feature type="binding site" evidence="1">
    <location>
        <position position="123"/>
    </location>
    <ligand>
        <name>Mg(2+)</name>
        <dbReference type="ChEBI" id="CHEBI:18420"/>
    </ligand>
</feature>
<feature type="binding site" evidence="1">
    <location>
        <position position="126"/>
    </location>
    <ligand>
        <name>Mg(2+)</name>
        <dbReference type="ChEBI" id="CHEBI:18420"/>
    </ligand>
</feature>
<proteinExistence type="inferred from homology"/>
<accession>B0TGW4</accession>
<organism>
    <name type="scientific">Heliobacterium modesticaldum (strain ATCC 51547 / Ice1)</name>
    <dbReference type="NCBI Taxonomy" id="498761"/>
    <lineage>
        <taxon>Bacteria</taxon>
        <taxon>Bacillati</taxon>
        <taxon>Bacillota</taxon>
        <taxon>Clostridia</taxon>
        <taxon>Eubacteriales</taxon>
        <taxon>Heliobacteriaceae</taxon>
        <taxon>Heliomicrobium</taxon>
    </lineage>
</organism>
<sequence length="235" mass="25543">MKRAPNHPAELARRIGIASEDLATLEMALTHPSFVYENPQAPPEHNQRLEFLGDAVLGLVIGEQLFVRYPTWTEGELSRRRAAVVCEANLADGARRLQLGAWLKLGRGEEASGGREKPSILADALEAVIGAIFLSGGIEAARRFIVDLFGDALANAQNLVSGDNKTAFQEWVQRTGPADIRYCIVDESGPDHDKRFVAAVMVNGTVIADGQGRTKKEAEQQAAGRAMREWAGRKG</sequence>
<name>RNC_HELMI</name>
<protein>
    <recommendedName>
        <fullName evidence="1">Ribonuclease 3</fullName>
        <ecNumber evidence="1">3.1.26.3</ecNumber>
    </recommendedName>
    <alternativeName>
        <fullName evidence="1">Ribonuclease III</fullName>
        <shortName evidence="1">RNase III</shortName>
    </alternativeName>
</protein>